<name>Y1098_ALTMD</name>
<reference key="1">
    <citation type="journal article" date="2008" name="ISME J.">
        <title>Comparative genomics of two ecotypes of the marine planktonic copiotroph Alteromonas macleodii suggests alternative lifestyles associated with different kinds of particulate organic matter.</title>
        <authorList>
            <person name="Ivars-Martinez E."/>
            <person name="Martin-Cuadrado A.-B."/>
            <person name="D'Auria G."/>
            <person name="Mira A."/>
            <person name="Ferriera S."/>
            <person name="Johnson J."/>
            <person name="Friedman R."/>
            <person name="Rodriguez-Valera F."/>
        </authorList>
    </citation>
    <scope>NUCLEOTIDE SEQUENCE [LARGE SCALE GENOMIC DNA]</scope>
    <source>
        <strain>DSM 17117 / CIP 110805 / LMG 28347 / Deep ecotype</strain>
    </source>
</reference>
<feature type="chain" id="PRO_1000114580" description="Nucleoid-associated protein MADE_1013280">
    <location>
        <begin position="1"/>
        <end position="109"/>
    </location>
</feature>
<feature type="region of interest" description="Disordered" evidence="2">
    <location>
        <begin position="86"/>
        <end position="109"/>
    </location>
</feature>
<feature type="compositionally biased region" description="Pro residues" evidence="2">
    <location>
        <begin position="99"/>
        <end position="109"/>
    </location>
</feature>
<accession>B4RU48</accession>
<accession>F2G8T0</accession>
<comment type="function">
    <text evidence="1">Binds to DNA and alters its conformation. May be involved in regulation of gene expression, nucleoid organization and DNA protection.</text>
</comment>
<comment type="subunit">
    <text evidence="1">Homodimer.</text>
</comment>
<comment type="subcellular location">
    <subcellularLocation>
        <location evidence="1">Cytoplasm</location>
        <location evidence="1">Nucleoid</location>
    </subcellularLocation>
</comment>
<comment type="similarity">
    <text evidence="1">Belongs to the YbaB/EbfC family.</text>
</comment>
<protein>
    <recommendedName>
        <fullName evidence="1">Nucleoid-associated protein MADE_1013280</fullName>
    </recommendedName>
</protein>
<gene>
    <name type="ordered locus">MADE_1013280</name>
</gene>
<proteinExistence type="inferred from homology"/>
<evidence type="ECO:0000255" key="1">
    <source>
        <dbReference type="HAMAP-Rule" id="MF_00274"/>
    </source>
</evidence>
<evidence type="ECO:0000256" key="2">
    <source>
        <dbReference type="SAM" id="MobiDB-lite"/>
    </source>
</evidence>
<organism>
    <name type="scientific">Alteromonas mediterranea (strain DSM 17117 / CIP 110805 / LMG 28347 / Deep ecotype)</name>
    <dbReference type="NCBI Taxonomy" id="1774373"/>
    <lineage>
        <taxon>Bacteria</taxon>
        <taxon>Pseudomonadati</taxon>
        <taxon>Pseudomonadota</taxon>
        <taxon>Gammaproteobacteria</taxon>
        <taxon>Alteromonadales</taxon>
        <taxon>Alteromonadaceae</taxon>
        <taxon>Alteromonas/Salinimonas group</taxon>
        <taxon>Alteromonas</taxon>
    </lineage>
</organism>
<dbReference type="EMBL" id="CP001103">
    <property type="protein sequence ID" value="AEA98790.1"/>
    <property type="molecule type" value="Genomic_DNA"/>
</dbReference>
<dbReference type="RefSeq" id="WP_012519082.1">
    <property type="nucleotide sequence ID" value="NC_011138.3"/>
</dbReference>
<dbReference type="SMR" id="B4RU48"/>
<dbReference type="KEGG" id="amc:MADE_1013280"/>
<dbReference type="HOGENOM" id="CLU_140930_0_0_6"/>
<dbReference type="Proteomes" id="UP000001870">
    <property type="component" value="Chromosome"/>
</dbReference>
<dbReference type="GO" id="GO:0043590">
    <property type="term" value="C:bacterial nucleoid"/>
    <property type="evidence" value="ECO:0007669"/>
    <property type="project" value="UniProtKB-UniRule"/>
</dbReference>
<dbReference type="GO" id="GO:0005829">
    <property type="term" value="C:cytosol"/>
    <property type="evidence" value="ECO:0007669"/>
    <property type="project" value="TreeGrafter"/>
</dbReference>
<dbReference type="GO" id="GO:0003677">
    <property type="term" value="F:DNA binding"/>
    <property type="evidence" value="ECO:0007669"/>
    <property type="project" value="UniProtKB-UniRule"/>
</dbReference>
<dbReference type="FunFam" id="3.30.1310.10:FF:000001">
    <property type="entry name" value="Nucleoid-associated protein YbaB"/>
    <property type="match status" value="1"/>
</dbReference>
<dbReference type="Gene3D" id="3.30.1310.10">
    <property type="entry name" value="Nucleoid-associated protein YbaB-like domain"/>
    <property type="match status" value="1"/>
</dbReference>
<dbReference type="HAMAP" id="MF_00274">
    <property type="entry name" value="DNA_YbaB_EbfC"/>
    <property type="match status" value="1"/>
</dbReference>
<dbReference type="InterPro" id="IPR036894">
    <property type="entry name" value="YbaB-like_sf"/>
</dbReference>
<dbReference type="InterPro" id="IPR004401">
    <property type="entry name" value="YbaB/EbfC"/>
</dbReference>
<dbReference type="NCBIfam" id="TIGR00103">
    <property type="entry name" value="DNA_YbaB_EbfC"/>
    <property type="match status" value="1"/>
</dbReference>
<dbReference type="PANTHER" id="PTHR33449">
    <property type="entry name" value="NUCLEOID-ASSOCIATED PROTEIN YBAB"/>
    <property type="match status" value="1"/>
</dbReference>
<dbReference type="PANTHER" id="PTHR33449:SF1">
    <property type="entry name" value="NUCLEOID-ASSOCIATED PROTEIN YBAB"/>
    <property type="match status" value="1"/>
</dbReference>
<dbReference type="Pfam" id="PF02575">
    <property type="entry name" value="YbaB_DNA_bd"/>
    <property type="match status" value="1"/>
</dbReference>
<dbReference type="PIRSF" id="PIRSF004555">
    <property type="entry name" value="UCP004555"/>
    <property type="match status" value="1"/>
</dbReference>
<dbReference type="SUPFAM" id="SSF82607">
    <property type="entry name" value="YbaB-like"/>
    <property type="match status" value="1"/>
</dbReference>
<sequence>MFKGGMGNIMKQAQQMQERMQKVQDDLANLEVTGEAGAGMVKVTMTCNHNVRRVNIDESLMDDDKDMVEDLVAAAFNDAVRRVQETSKEKMGDVTGGMPLPPGFKMPGF</sequence>
<keyword id="KW-0963">Cytoplasm</keyword>
<keyword id="KW-0238">DNA-binding</keyword>